<keyword id="KW-0378">Hydrolase</keyword>
<keyword id="KW-0479">Metal-binding</keyword>
<keyword id="KW-0482">Metalloprotease</keyword>
<keyword id="KW-0645">Protease</keyword>
<keyword id="KW-1267">Proteomics identification</keyword>
<keyword id="KW-1185">Reference proteome</keyword>
<dbReference type="EC" id="3.4.24.-"/>
<dbReference type="EMBL" id="AF078164">
    <property type="protein sequence ID" value="AAD31085.1"/>
    <property type="status" value="ALT_INIT"/>
    <property type="molecule type" value="mRNA"/>
</dbReference>
<dbReference type="EMBL" id="AC084033">
    <property type="status" value="NOT_ANNOTATED_CDS"/>
    <property type="molecule type" value="Genomic_DNA"/>
</dbReference>
<dbReference type="EMBL" id="CH471054">
    <property type="protein sequence ID" value="EAW97091.1"/>
    <property type="molecule type" value="Genomic_DNA"/>
</dbReference>
<dbReference type="EMBL" id="BC012776">
    <property type="protein sequence ID" value="AAH12776.3"/>
    <property type="molecule type" value="mRNA"/>
</dbReference>
<dbReference type="EMBL" id="BC115381">
    <property type="protein sequence ID" value="AAI15382.1"/>
    <property type="molecule type" value="mRNA"/>
</dbReference>
<dbReference type="EMBL" id="BC115382">
    <property type="protein sequence ID" value="AAI15383.1"/>
    <property type="molecule type" value="mRNA"/>
</dbReference>
<dbReference type="CCDS" id="CCDS41802.1"/>
<dbReference type="RefSeq" id="NP_001307337.1">
    <property type="nucleotide sequence ID" value="NM_001320408.1"/>
</dbReference>
<dbReference type="RefSeq" id="NP_001307338.1">
    <property type="nucleotide sequence ID" value="NM_001320409.1"/>
</dbReference>
<dbReference type="RefSeq" id="NP_001307339.1">
    <property type="nucleotide sequence ID" value="NM_001320410.1"/>
</dbReference>
<dbReference type="RefSeq" id="NP_150592.1">
    <property type="nucleotide sequence ID" value="NM_033276.4"/>
</dbReference>
<dbReference type="BioGRID" id="124830">
    <property type="interactions" value="59"/>
</dbReference>
<dbReference type="FunCoup" id="Q9Y6H3">
    <property type="interactions" value="1999"/>
</dbReference>
<dbReference type="IntAct" id="Q9Y6H3">
    <property type="interactions" value="51"/>
</dbReference>
<dbReference type="STRING" id="9606.ENSP00000300145"/>
<dbReference type="MEROPS" id="M76.001"/>
<dbReference type="GlyGen" id="Q9Y6H3">
    <property type="glycosylation" value="1 site, 1 O-linked glycan (1 site)"/>
</dbReference>
<dbReference type="iPTMnet" id="Q9Y6H3"/>
<dbReference type="PhosphoSitePlus" id="Q9Y6H3"/>
<dbReference type="BioMuta" id="ATP23"/>
<dbReference type="DMDM" id="224471894"/>
<dbReference type="jPOST" id="Q9Y6H3"/>
<dbReference type="MassIVE" id="Q9Y6H3"/>
<dbReference type="PaxDb" id="9606-ENSP00000300145"/>
<dbReference type="PeptideAtlas" id="Q9Y6H3"/>
<dbReference type="ProteomicsDB" id="86679"/>
<dbReference type="Pumba" id="Q9Y6H3"/>
<dbReference type="Antibodypedia" id="28994">
    <property type="antibodies" value="101 antibodies from 17 providers"/>
</dbReference>
<dbReference type="DNASU" id="91419"/>
<dbReference type="Ensembl" id="ENST00000300145.4">
    <property type="protein sequence ID" value="ENSP00000300145.3"/>
    <property type="gene ID" value="ENSG00000166896.9"/>
</dbReference>
<dbReference type="Ensembl" id="ENST00000571490.1">
    <property type="protein sequence ID" value="ENSP00000460944.1"/>
    <property type="gene ID" value="ENSG00000262145.5"/>
</dbReference>
<dbReference type="GeneID" id="91419"/>
<dbReference type="KEGG" id="hsa:91419"/>
<dbReference type="MANE-Select" id="ENST00000300145.4">
    <property type="protein sequence ID" value="ENSP00000300145.3"/>
    <property type="RefSeq nucleotide sequence ID" value="NM_033276.4"/>
    <property type="RefSeq protein sequence ID" value="NP_150592.1"/>
</dbReference>
<dbReference type="UCSC" id="uc001sqp.4">
    <property type="organism name" value="human"/>
</dbReference>
<dbReference type="AGR" id="HGNC:29452"/>
<dbReference type="CTD" id="91419"/>
<dbReference type="DisGeNET" id="91419"/>
<dbReference type="GeneCards" id="ATP23"/>
<dbReference type="HGNC" id="HGNC:29452">
    <property type="gene designation" value="ATP23"/>
</dbReference>
<dbReference type="HPA" id="ENSG00000166896">
    <property type="expression patterns" value="Tissue enhanced (testis)"/>
</dbReference>
<dbReference type="MIM" id="619760">
    <property type="type" value="gene"/>
</dbReference>
<dbReference type="neXtProt" id="NX_Q9Y6H3"/>
<dbReference type="OpenTargets" id="ENSG00000166896"/>
<dbReference type="PharmGKB" id="PA142670557"/>
<dbReference type="VEuPathDB" id="HostDB:ENSG00000166896"/>
<dbReference type="eggNOG" id="KOG3314">
    <property type="taxonomic scope" value="Eukaryota"/>
</dbReference>
<dbReference type="GeneTree" id="ENSGT00390000010948"/>
<dbReference type="HOGENOM" id="CLU_079125_1_0_1"/>
<dbReference type="InParanoid" id="Q9Y6H3"/>
<dbReference type="OMA" id="KRHHQTC"/>
<dbReference type="OrthoDB" id="285308at2759"/>
<dbReference type="PAN-GO" id="Q9Y6H3">
    <property type="GO annotations" value="3 GO annotations based on evolutionary models"/>
</dbReference>
<dbReference type="PhylomeDB" id="Q9Y6H3"/>
<dbReference type="TreeFam" id="TF327014"/>
<dbReference type="PathwayCommons" id="Q9Y6H3"/>
<dbReference type="SignaLink" id="Q9Y6H3"/>
<dbReference type="BioGRID-ORCS" id="91419">
    <property type="hits" value="60 hits in 1145 CRISPR screens"/>
</dbReference>
<dbReference type="ChiTaRS" id="ATP23">
    <property type="organism name" value="human"/>
</dbReference>
<dbReference type="GenomeRNAi" id="91419"/>
<dbReference type="Pharos" id="Q9Y6H3">
    <property type="development level" value="Tbio"/>
</dbReference>
<dbReference type="PRO" id="PR:Q9Y6H3"/>
<dbReference type="Proteomes" id="UP000005640">
    <property type="component" value="Chromosome 12"/>
</dbReference>
<dbReference type="RNAct" id="Q9Y6H3">
    <property type="molecule type" value="protein"/>
</dbReference>
<dbReference type="Bgee" id="ENSG00000166896">
    <property type="expression patterns" value="Expressed in right testis and 102 other cell types or tissues"/>
</dbReference>
<dbReference type="ExpressionAtlas" id="Q9Y6H3">
    <property type="expression patterns" value="baseline and differential"/>
</dbReference>
<dbReference type="GO" id="GO:0030054">
    <property type="term" value="C:cell junction"/>
    <property type="evidence" value="ECO:0000314"/>
    <property type="project" value="HPA"/>
</dbReference>
<dbReference type="GO" id="GO:0005829">
    <property type="term" value="C:cytosol"/>
    <property type="evidence" value="ECO:0000314"/>
    <property type="project" value="HPA"/>
</dbReference>
<dbReference type="GO" id="GO:0005958">
    <property type="term" value="C:DNA-dependent protein kinase-DNA ligase 4 complex"/>
    <property type="evidence" value="ECO:0000303"/>
    <property type="project" value="UniProtKB"/>
</dbReference>
<dbReference type="GO" id="GO:0043231">
    <property type="term" value="C:intracellular membrane-bounded organelle"/>
    <property type="evidence" value="ECO:0000314"/>
    <property type="project" value="HPA"/>
</dbReference>
<dbReference type="GO" id="GO:0005739">
    <property type="term" value="C:mitochondrion"/>
    <property type="evidence" value="ECO:0006056"/>
    <property type="project" value="FlyBase"/>
</dbReference>
<dbReference type="GO" id="GO:0005886">
    <property type="term" value="C:plasma membrane"/>
    <property type="evidence" value="ECO:0000314"/>
    <property type="project" value="HPA"/>
</dbReference>
<dbReference type="GO" id="GO:0004677">
    <property type="term" value="F:DNA-dependent protein kinase activity"/>
    <property type="evidence" value="ECO:0000304"/>
    <property type="project" value="UniProtKB"/>
</dbReference>
<dbReference type="GO" id="GO:0046872">
    <property type="term" value="F:metal ion binding"/>
    <property type="evidence" value="ECO:0007669"/>
    <property type="project" value="UniProtKB-KW"/>
</dbReference>
<dbReference type="GO" id="GO:0004222">
    <property type="term" value="F:metalloendopeptidase activity"/>
    <property type="evidence" value="ECO:0007669"/>
    <property type="project" value="InterPro"/>
</dbReference>
<dbReference type="GO" id="GO:0006303">
    <property type="term" value="P:double-strand break repair via nonhomologous end joining"/>
    <property type="evidence" value="ECO:0000304"/>
    <property type="project" value="UniProtKB"/>
</dbReference>
<dbReference type="GO" id="GO:0034982">
    <property type="term" value="P:mitochondrial protein processing"/>
    <property type="evidence" value="ECO:0000318"/>
    <property type="project" value="GO_Central"/>
</dbReference>
<dbReference type="GO" id="GO:0033615">
    <property type="term" value="P:mitochondrial proton-transporting ATP synthase complex assembly"/>
    <property type="evidence" value="ECO:0000318"/>
    <property type="project" value="GO_Central"/>
</dbReference>
<dbReference type="InterPro" id="IPR019165">
    <property type="entry name" value="Peptidase_M76_ATP23"/>
</dbReference>
<dbReference type="PANTHER" id="PTHR21711">
    <property type="entry name" value="MITOCHONDRIAL INNER MEMBRANE PROTEASE"/>
    <property type="match status" value="1"/>
</dbReference>
<dbReference type="PANTHER" id="PTHR21711:SF0">
    <property type="entry name" value="MITOCHONDRIAL INNER MEMBRANE PROTEASE ATP23 HOMOLOG"/>
    <property type="match status" value="1"/>
</dbReference>
<dbReference type="Pfam" id="PF09768">
    <property type="entry name" value="Peptidase_M76"/>
    <property type="match status" value="1"/>
</dbReference>
<dbReference type="PROSITE" id="PS00142">
    <property type="entry name" value="ZINC_PROTEASE"/>
    <property type="match status" value="1"/>
</dbReference>
<protein>
    <recommendedName>
        <fullName>Mitochondrial inner membrane protease ATP23 homolog</fullName>
        <ecNumber>3.4.24.-</ecNumber>
    </recommendedName>
    <alternativeName>
        <fullName>Ku70-binding protein 3</fullName>
    </alternativeName>
    <alternativeName>
        <fullName>XRCC6-binding protein 1</fullName>
    </alternativeName>
</protein>
<gene>
    <name evidence="5" type="primary">ATP23</name>
    <name type="synonym">KUB3</name>
    <name type="synonym">XRCC6BP1</name>
</gene>
<organism>
    <name type="scientific">Homo sapiens</name>
    <name type="common">Human</name>
    <dbReference type="NCBI Taxonomy" id="9606"/>
    <lineage>
        <taxon>Eukaryota</taxon>
        <taxon>Metazoa</taxon>
        <taxon>Chordata</taxon>
        <taxon>Craniata</taxon>
        <taxon>Vertebrata</taxon>
        <taxon>Euteleostomi</taxon>
        <taxon>Mammalia</taxon>
        <taxon>Eutheria</taxon>
        <taxon>Euarchontoglires</taxon>
        <taxon>Primates</taxon>
        <taxon>Haplorrhini</taxon>
        <taxon>Catarrhini</taxon>
        <taxon>Hominidae</taxon>
        <taxon>Homo</taxon>
    </lineage>
</organism>
<reference key="1">
    <citation type="journal article" date="1999" name="Nucleic Acids Res.">
        <title>Isolation of Ku70-binding proteins (KUBs).</title>
        <authorList>
            <person name="Yang C.-R."/>
            <person name="Yeh S.-Y."/>
            <person name="Leskov K."/>
            <person name="Odegaard E."/>
            <person name="Hsu H.L."/>
            <person name="Chang C."/>
            <person name="Kinsella T.J."/>
            <person name="Chen D.J."/>
            <person name="Boothman D.A."/>
        </authorList>
    </citation>
    <scope>NUCLEOTIDE SEQUENCE [MRNA]</scope>
    <scope>VARIANT CYS-48</scope>
    <scope>INTERACTION WITH XRCC6</scope>
    <source>
        <tissue>Liver</tissue>
    </source>
</reference>
<reference key="2">
    <citation type="journal article" date="2006" name="Nature">
        <title>The finished DNA sequence of human chromosome 12.</title>
        <authorList>
            <person name="Scherer S.E."/>
            <person name="Muzny D.M."/>
            <person name="Buhay C.J."/>
            <person name="Chen R."/>
            <person name="Cree A."/>
            <person name="Ding Y."/>
            <person name="Dugan-Rocha S."/>
            <person name="Gill R."/>
            <person name="Gunaratne P."/>
            <person name="Harris R.A."/>
            <person name="Hawes A.C."/>
            <person name="Hernandez J."/>
            <person name="Hodgson A.V."/>
            <person name="Hume J."/>
            <person name="Jackson A."/>
            <person name="Khan Z.M."/>
            <person name="Kovar-Smith C."/>
            <person name="Lewis L.R."/>
            <person name="Lozado R.J."/>
            <person name="Metzker M.L."/>
            <person name="Milosavljevic A."/>
            <person name="Miner G.R."/>
            <person name="Montgomery K.T."/>
            <person name="Morgan M.B."/>
            <person name="Nazareth L.V."/>
            <person name="Scott G."/>
            <person name="Sodergren E."/>
            <person name="Song X.-Z."/>
            <person name="Steffen D."/>
            <person name="Lovering R.C."/>
            <person name="Wheeler D.A."/>
            <person name="Worley K.C."/>
            <person name="Yuan Y."/>
            <person name="Zhang Z."/>
            <person name="Adams C.Q."/>
            <person name="Ansari-Lari M.A."/>
            <person name="Ayele M."/>
            <person name="Brown M.J."/>
            <person name="Chen G."/>
            <person name="Chen Z."/>
            <person name="Clerc-Blankenburg K.P."/>
            <person name="Davis C."/>
            <person name="Delgado O."/>
            <person name="Dinh H.H."/>
            <person name="Draper H."/>
            <person name="Gonzalez-Garay M.L."/>
            <person name="Havlak P."/>
            <person name="Jackson L.R."/>
            <person name="Jacob L.S."/>
            <person name="Kelly S.H."/>
            <person name="Li L."/>
            <person name="Li Z."/>
            <person name="Liu J."/>
            <person name="Liu W."/>
            <person name="Lu J."/>
            <person name="Maheshwari M."/>
            <person name="Nguyen B.-V."/>
            <person name="Okwuonu G.O."/>
            <person name="Pasternak S."/>
            <person name="Perez L.M."/>
            <person name="Plopper F.J.H."/>
            <person name="Santibanez J."/>
            <person name="Shen H."/>
            <person name="Tabor P.E."/>
            <person name="Verduzco D."/>
            <person name="Waldron L."/>
            <person name="Wang Q."/>
            <person name="Williams G.A."/>
            <person name="Zhang J."/>
            <person name="Zhou J."/>
            <person name="Allen C.C."/>
            <person name="Amin A.G."/>
            <person name="Anyalebechi V."/>
            <person name="Bailey M."/>
            <person name="Barbaria J.A."/>
            <person name="Bimage K.E."/>
            <person name="Bryant N.P."/>
            <person name="Burch P.E."/>
            <person name="Burkett C.E."/>
            <person name="Burrell K.L."/>
            <person name="Calderon E."/>
            <person name="Cardenas V."/>
            <person name="Carter K."/>
            <person name="Casias K."/>
            <person name="Cavazos I."/>
            <person name="Cavazos S.R."/>
            <person name="Ceasar H."/>
            <person name="Chacko J."/>
            <person name="Chan S.N."/>
            <person name="Chavez D."/>
            <person name="Christopoulos C."/>
            <person name="Chu J."/>
            <person name="Cockrell R."/>
            <person name="Cox C.D."/>
            <person name="Dang M."/>
            <person name="Dathorne S.R."/>
            <person name="David R."/>
            <person name="Davis C.M."/>
            <person name="Davy-Carroll L."/>
            <person name="Deshazo D.R."/>
            <person name="Donlin J.E."/>
            <person name="D'Souza L."/>
            <person name="Eaves K.A."/>
            <person name="Egan A."/>
            <person name="Emery-Cohen A.J."/>
            <person name="Escotto M."/>
            <person name="Flagg N."/>
            <person name="Forbes L.D."/>
            <person name="Gabisi A.M."/>
            <person name="Garza M."/>
            <person name="Hamilton C."/>
            <person name="Henderson N."/>
            <person name="Hernandez O."/>
            <person name="Hines S."/>
            <person name="Hogues M.E."/>
            <person name="Huang M."/>
            <person name="Idlebird D.G."/>
            <person name="Johnson R."/>
            <person name="Jolivet A."/>
            <person name="Jones S."/>
            <person name="Kagan R."/>
            <person name="King L.M."/>
            <person name="Leal B."/>
            <person name="Lebow H."/>
            <person name="Lee S."/>
            <person name="LeVan J.M."/>
            <person name="Lewis L.C."/>
            <person name="London P."/>
            <person name="Lorensuhewa L.M."/>
            <person name="Loulseged H."/>
            <person name="Lovett D.A."/>
            <person name="Lucier A."/>
            <person name="Lucier R.L."/>
            <person name="Ma J."/>
            <person name="Madu R.C."/>
            <person name="Mapua P."/>
            <person name="Martindale A.D."/>
            <person name="Martinez E."/>
            <person name="Massey E."/>
            <person name="Mawhiney S."/>
            <person name="Meador M.G."/>
            <person name="Mendez S."/>
            <person name="Mercado C."/>
            <person name="Mercado I.C."/>
            <person name="Merritt C.E."/>
            <person name="Miner Z.L."/>
            <person name="Minja E."/>
            <person name="Mitchell T."/>
            <person name="Mohabbat F."/>
            <person name="Mohabbat K."/>
            <person name="Montgomery B."/>
            <person name="Moore N."/>
            <person name="Morris S."/>
            <person name="Munidasa M."/>
            <person name="Ngo R.N."/>
            <person name="Nguyen N.B."/>
            <person name="Nickerson E."/>
            <person name="Nwaokelemeh O.O."/>
            <person name="Nwokenkwo S."/>
            <person name="Obregon M."/>
            <person name="Oguh M."/>
            <person name="Oragunye N."/>
            <person name="Oviedo R.J."/>
            <person name="Parish B.J."/>
            <person name="Parker D.N."/>
            <person name="Parrish J."/>
            <person name="Parks K.L."/>
            <person name="Paul H.A."/>
            <person name="Payton B.A."/>
            <person name="Perez A."/>
            <person name="Perrin W."/>
            <person name="Pickens A."/>
            <person name="Primus E.L."/>
            <person name="Pu L.-L."/>
            <person name="Puazo M."/>
            <person name="Quiles M.M."/>
            <person name="Quiroz J.B."/>
            <person name="Rabata D."/>
            <person name="Reeves K."/>
            <person name="Ruiz S.J."/>
            <person name="Shao H."/>
            <person name="Sisson I."/>
            <person name="Sonaike T."/>
            <person name="Sorelle R.P."/>
            <person name="Sutton A.E."/>
            <person name="Svatek A.F."/>
            <person name="Svetz L.A."/>
            <person name="Tamerisa K.S."/>
            <person name="Taylor T.R."/>
            <person name="Teague B."/>
            <person name="Thomas N."/>
            <person name="Thorn R.D."/>
            <person name="Trejos Z.Y."/>
            <person name="Trevino B.K."/>
            <person name="Ukegbu O.N."/>
            <person name="Urban J.B."/>
            <person name="Vasquez L.I."/>
            <person name="Vera V.A."/>
            <person name="Villasana D.M."/>
            <person name="Wang L."/>
            <person name="Ward-Moore S."/>
            <person name="Warren J.T."/>
            <person name="Wei X."/>
            <person name="White F."/>
            <person name="Williamson A.L."/>
            <person name="Wleczyk R."/>
            <person name="Wooden H.S."/>
            <person name="Wooden S.H."/>
            <person name="Yen J."/>
            <person name="Yoon L."/>
            <person name="Yoon V."/>
            <person name="Zorrilla S.E."/>
            <person name="Nelson D."/>
            <person name="Kucherlapati R."/>
            <person name="Weinstock G."/>
            <person name="Gibbs R.A."/>
        </authorList>
    </citation>
    <scope>NUCLEOTIDE SEQUENCE [LARGE SCALE GENOMIC DNA]</scope>
</reference>
<reference key="3">
    <citation type="submission" date="2005-07" db="EMBL/GenBank/DDBJ databases">
        <authorList>
            <person name="Mural R.J."/>
            <person name="Istrail S."/>
            <person name="Sutton G.G."/>
            <person name="Florea L."/>
            <person name="Halpern A.L."/>
            <person name="Mobarry C.M."/>
            <person name="Lippert R."/>
            <person name="Walenz B."/>
            <person name="Shatkay H."/>
            <person name="Dew I."/>
            <person name="Miller J.R."/>
            <person name="Flanigan M.J."/>
            <person name="Edwards N.J."/>
            <person name="Bolanos R."/>
            <person name="Fasulo D."/>
            <person name="Halldorsson B.V."/>
            <person name="Hannenhalli S."/>
            <person name="Turner R."/>
            <person name="Yooseph S."/>
            <person name="Lu F."/>
            <person name="Nusskern D.R."/>
            <person name="Shue B.C."/>
            <person name="Zheng X.H."/>
            <person name="Zhong F."/>
            <person name="Delcher A.L."/>
            <person name="Huson D.H."/>
            <person name="Kravitz S.A."/>
            <person name="Mouchard L."/>
            <person name="Reinert K."/>
            <person name="Remington K.A."/>
            <person name="Clark A.G."/>
            <person name="Waterman M.S."/>
            <person name="Eichler E.E."/>
            <person name="Adams M.D."/>
            <person name="Hunkapiller M.W."/>
            <person name="Myers E.W."/>
            <person name="Venter J.C."/>
        </authorList>
    </citation>
    <scope>NUCLEOTIDE SEQUENCE [LARGE SCALE GENOMIC DNA]</scope>
</reference>
<reference key="4">
    <citation type="journal article" date="2004" name="Genome Res.">
        <title>The status, quality, and expansion of the NIH full-length cDNA project: the Mammalian Gene Collection (MGC).</title>
        <authorList>
            <consortium name="The MGC Project Team"/>
        </authorList>
    </citation>
    <scope>NUCLEOTIDE SEQUENCE [LARGE SCALE MRNA]</scope>
    <source>
        <tissue>Lung</tissue>
    </source>
</reference>
<accession>Q9Y6H3</accession>
<accession>Q1RLM4</accession>
<accession>Q96E81</accession>
<name>ATP23_HUMAN</name>
<evidence type="ECO:0000250" key="1"/>
<evidence type="ECO:0000255" key="2">
    <source>
        <dbReference type="PROSITE-ProRule" id="PRU10095"/>
    </source>
</evidence>
<evidence type="ECO:0000269" key="3">
    <source>
    </source>
</evidence>
<evidence type="ECO:0000305" key="4"/>
<evidence type="ECO:0000312" key="5">
    <source>
        <dbReference type="HGNC" id="HGNC:29452"/>
    </source>
</evidence>
<comment type="subunit">
    <text evidence="3">Interacts with XRCC6.</text>
</comment>
<comment type="interaction">
    <interactant intactId="EBI-12811889">
        <id>Q9Y6H3</id>
    </interactant>
    <interactant intactId="EBI-11096309">
        <id>Q9NYB9-2</id>
        <label>ABI2</label>
    </interactant>
    <organismsDiffer>false</organismsDiffer>
    <experiments>3</experiments>
</comment>
<comment type="interaction">
    <interactant intactId="EBI-12811889">
        <id>Q9Y6H3</id>
    </interactant>
    <interactant intactId="EBI-2880652">
        <id>Q08043</id>
        <label>ACTN3</label>
    </interactant>
    <organismsDiffer>false</organismsDiffer>
    <experiments>3</experiments>
</comment>
<comment type="interaction">
    <interactant intactId="EBI-12811889">
        <id>Q9Y6H3</id>
    </interactant>
    <interactant intactId="EBI-8643161">
        <id>Q9NX04</id>
        <label>AIRIM</label>
    </interactant>
    <organismsDiffer>false</organismsDiffer>
    <experiments>3</experiments>
</comment>
<comment type="interaction">
    <interactant intactId="EBI-12811889">
        <id>Q9Y6H3</id>
    </interactant>
    <interactant intactId="EBI-1047414">
        <id>Q9H1Y0</id>
        <label>ATG5</label>
    </interactant>
    <organismsDiffer>false</organismsDiffer>
    <experiments>3</experiments>
</comment>
<comment type="interaction">
    <interactant intactId="EBI-12811889">
        <id>Q9Y6H3</id>
    </interactant>
    <interactant intactId="EBI-2949658">
        <id>O95429</id>
        <label>BAG4</label>
    </interactant>
    <organismsDiffer>false</organismsDiffer>
    <experiments>3</experiments>
</comment>
<comment type="interaction">
    <interactant intactId="EBI-12811889">
        <id>Q9Y6H3</id>
    </interactant>
    <interactant intactId="EBI-765407">
        <id>P41182</id>
        <label>BCL6</label>
    </interactant>
    <organismsDiffer>false</organismsDiffer>
    <experiments>3</experiments>
</comment>
<comment type="interaction">
    <interactant intactId="EBI-12811889">
        <id>Q9Y6H3</id>
    </interactant>
    <interactant intactId="EBI-744556">
        <id>Q96HB5</id>
        <label>CCDC120</label>
    </interactant>
    <organismsDiffer>false</organismsDiffer>
    <experiments>3</experiments>
</comment>
<comment type="interaction">
    <interactant intactId="EBI-12811889">
        <id>Q9Y6H3</id>
    </interactant>
    <interactant intactId="EBI-711360">
        <id>P33240</id>
        <label>CSTF2</label>
    </interactant>
    <organismsDiffer>false</organismsDiffer>
    <experiments>3</experiments>
</comment>
<comment type="interaction">
    <interactant intactId="EBI-12811889">
        <id>Q9Y6H3</id>
    </interactant>
    <interactant intactId="EBI-747012">
        <id>Q9H0L4</id>
        <label>CSTF2T</label>
    </interactant>
    <organismsDiffer>false</organismsDiffer>
    <experiments>3</experiments>
</comment>
<comment type="interaction">
    <interactant intactId="EBI-12811889">
        <id>Q9Y6H3</id>
    </interactant>
    <interactant intactId="EBI-11962928">
        <id>Q9UI47-2</id>
        <label>CTNNA3</label>
    </interactant>
    <organismsDiffer>false</organismsDiffer>
    <experiments>3</experiments>
</comment>
<comment type="interaction">
    <interactant intactId="EBI-12811889">
        <id>Q9Y6H3</id>
    </interactant>
    <interactant intactId="EBI-7357329">
        <id>Q9H596</id>
        <label>DUSP21</label>
    </interactant>
    <organismsDiffer>false</organismsDiffer>
    <experiments>3</experiments>
</comment>
<comment type="interaction">
    <interactant intactId="EBI-12811889">
        <id>Q9Y6H3</id>
    </interactant>
    <interactant intactId="EBI-356015">
        <id>Q14204</id>
        <label>DYNC1H1</label>
    </interactant>
    <organismsDiffer>false</organismsDiffer>
    <experiments>3</experiments>
</comment>
<comment type="interaction">
    <interactant intactId="EBI-12811889">
        <id>Q9Y6H3</id>
    </interactant>
    <interactant intactId="EBI-742102">
        <id>Q8IYI6</id>
        <label>EXOC8</label>
    </interactant>
    <organismsDiffer>false</organismsDiffer>
    <experiments>3</experiments>
</comment>
<comment type="interaction">
    <interactant intactId="EBI-12811889">
        <id>Q9Y6H3</id>
    </interactant>
    <interactant intactId="EBI-1759806">
        <id>O75593</id>
        <label>FOXH1</label>
    </interactant>
    <organismsDiffer>false</organismsDiffer>
    <experiments>3</experiments>
</comment>
<comment type="interaction">
    <interactant intactId="EBI-12811889">
        <id>Q9Y6H3</id>
    </interactant>
    <interactant intactId="EBI-12018822">
        <id>Q12951-2</id>
        <label>FOXI1</label>
    </interactant>
    <organismsDiffer>false</organismsDiffer>
    <experiments>3</experiments>
</comment>
<comment type="interaction">
    <interactant intactId="EBI-12811889">
        <id>Q9Y6H3</id>
    </interactant>
    <interactant intactId="EBI-725515">
        <id>O43559</id>
        <label>FRS3</label>
    </interactant>
    <organismsDiffer>false</organismsDiffer>
    <experiments>3</experiments>
</comment>
<comment type="interaction">
    <interactant intactId="EBI-12811889">
        <id>Q9Y6H3</id>
    </interactant>
    <interactant intactId="EBI-748515">
        <id>Q8IVS8</id>
        <label>GLYCTK</label>
    </interactant>
    <organismsDiffer>false</organismsDiffer>
    <experiments>3</experiments>
</comment>
<comment type="interaction">
    <interactant intactId="EBI-12811889">
        <id>Q9Y6H3</id>
    </interactant>
    <interactant intactId="EBI-11978177">
        <id>Q96NT3-2</id>
        <label>GUCD1</label>
    </interactant>
    <organismsDiffer>false</organismsDiffer>
    <experiments>3</experiments>
</comment>
<comment type="interaction">
    <interactant intactId="EBI-12811889">
        <id>Q9Y6H3</id>
    </interactant>
    <interactant intactId="EBI-352986">
        <id>P52597</id>
        <label>HNRNPF</label>
    </interactant>
    <organismsDiffer>false</organismsDiffer>
    <experiments>3</experiments>
</comment>
<comment type="interaction">
    <interactant intactId="EBI-12811889">
        <id>Q9Y6H3</id>
    </interactant>
    <interactant intactId="EBI-740785">
        <id>P49639</id>
        <label>HOXA1</label>
    </interactant>
    <organismsDiffer>false</organismsDiffer>
    <experiments>3</experiments>
</comment>
<comment type="interaction">
    <interactant intactId="EBI-12811889">
        <id>Q9Y6H3</id>
    </interactant>
    <interactant intactId="EBI-2880706">
        <id>O43593</id>
        <label>HR</label>
    </interactant>
    <organismsDiffer>false</organismsDiffer>
    <experiments>3</experiments>
</comment>
<comment type="interaction">
    <interactant intactId="EBI-12811889">
        <id>Q9Y6H3</id>
    </interactant>
    <interactant intactId="EBI-12076930">
        <id>Q6P597-3</id>
        <label>KLC3</label>
    </interactant>
    <organismsDiffer>false</organismsDiffer>
    <experiments>3</experiments>
</comment>
<comment type="interaction">
    <interactant intactId="EBI-12811889">
        <id>Q9Y6H3</id>
    </interactant>
    <interactant intactId="EBI-2432309">
        <id>Q92876</id>
        <label>KLK6</label>
    </interactant>
    <organismsDiffer>false</organismsDiffer>
    <experiments>3</experiments>
</comment>
<comment type="interaction">
    <interactant intactId="EBI-12811889">
        <id>Q9Y6H3</id>
    </interactant>
    <interactant intactId="EBI-769257">
        <id>Q9NRQ2</id>
        <label>PLSCR4</label>
    </interactant>
    <organismsDiffer>false</organismsDiffer>
    <experiments>3</experiments>
</comment>
<comment type="interaction">
    <interactant intactId="EBI-12811889">
        <id>Q9Y6H3</id>
    </interactant>
    <interactant intactId="EBI-710402">
        <id>Q96I34</id>
        <label>PPP1R16A</label>
    </interactant>
    <organismsDiffer>false</organismsDiffer>
    <experiments>3</experiments>
</comment>
<comment type="interaction">
    <interactant intactId="EBI-12811889">
        <id>Q9Y6H3</id>
    </interactant>
    <interactant intactId="EBI-749295">
        <id>O75716</id>
        <label>STK16</label>
    </interactant>
    <organismsDiffer>false</organismsDiffer>
    <experiments>3</experiments>
</comment>
<comment type="interaction">
    <interactant intactId="EBI-12811889">
        <id>Q9Y6H3</id>
    </interactant>
    <interactant intactId="EBI-3918381">
        <id>Q96PN8</id>
        <label>TSSK3</label>
    </interactant>
    <organismsDiffer>false</organismsDiffer>
    <experiments>3</experiments>
</comment>
<comment type="interaction">
    <interactant intactId="EBI-12811889">
        <id>Q9Y6H3</id>
    </interactant>
    <interactant intactId="EBI-11963196">
        <id>Q15915</id>
        <label>ZIC1</label>
    </interactant>
    <organismsDiffer>false</organismsDiffer>
    <experiments>3</experiments>
</comment>
<comment type="similarity">
    <text evidence="4">Belongs to the peptidase M76 family.</text>
</comment>
<comment type="sequence caution" evidence="4">
    <conflict type="erroneous initiation">
        <sequence resource="EMBL-CDS" id="AAD31085"/>
    </conflict>
</comment>
<sequence length="246" mass="28081">MAGAPDERRRGPAAGEQLQQQHVSCQVFPERLAQGNPQQGFFSSFFTSNQKCQLRLLKTLETNPYVKLLLDAMKHSGCAVNKDRHFSCEDCNGNVSGGFDASTSQIVLCQNNIHNQAHMNRVVTHELIHAFDHCRAHVDWFTNIRHLACSEVRAANLSGDCSLVNEIFRLHFGLKQHHQTCVRDRATLSILAVRNISKEVAKKAVDEVFESCFNDHEPFGRIPHNKTYARYAHRDFENRDRYYSNI</sequence>
<proteinExistence type="evidence at protein level"/>
<feature type="chain" id="PRO_0000330344" description="Mitochondrial inner membrane protease ATP23 homolog">
    <location>
        <begin position="1"/>
        <end position="246"/>
    </location>
</feature>
<feature type="active site" evidence="2">
    <location>
        <position position="126"/>
    </location>
</feature>
<feature type="binding site" evidence="1">
    <location>
        <position position="125"/>
    </location>
    <ligand>
        <name>a divalent metal cation</name>
        <dbReference type="ChEBI" id="CHEBI:60240"/>
        <note>catalytic</note>
    </ligand>
</feature>
<feature type="binding site" evidence="1">
    <location>
        <position position="129"/>
    </location>
    <ligand>
        <name>a divalent metal cation</name>
        <dbReference type="ChEBI" id="CHEBI:60240"/>
        <note>catalytic</note>
    </ligand>
</feature>
<feature type="sequence variant" id="VAR_054489" description="In dbSNP:rs3751325." evidence="3">
    <original>S</original>
    <variation>C</variation>
    <location>
        <position position="48"/>
    </location>
</feature>